<organism>
    <name type="scientific">Rhipicephalus microplus</name>
    <name type="common">Cattle tick</name>
    <name type="synonym">Boophilus microplus</name>
    <dbReference type="NCBI Taxonomy" id="6941"/>
    <lineage>
        <taxon>Eukaryota</taxon>
        <taxon>Metazoa</taxon>
        <taxon>Ecdysozoa</taxon>
        <taxon>Arthropoda</taxon>
        <taxon>Chelicerata</taxon>
        <taxon>Arachnida</taxon>
        <taxon>Acari</taxon>
        <taxon>Parasitiformes</taxon>
        <taxon>Ixodida</taxon>
        <taxon>Ixodoidea</taxon>
        <taxon>Ixodidae</taxon>
        <taxon>Rhipicephalinae</taxon>
        <taxon>Rhipicephalus</taxon>
        <taxon>Boophilus</taxon>
    </lineage>
</organism>
<name>TILI_RHIMP</name>
<protein>
    <recommendedName>
        <fullName evidence="4">Chymotrypsin-elastase inhibitor ixodidin</fullName>
    </recommendedName>
</protein>
<sequence>QRGSRGQRCGPGEVFNQCGSACPRVCGRPPAQACTLQCVSGCFCRRGYIRTQRGGCIPERQCHQR</sequence>
<feature type="chain" id="PRO_0000174333" description="Chymotrypsin-elastase inhibitor ixodidin">
    <location>
        <begin position="1"/>
        <end position="65"/>
    </location>
</feature>
<feature type="domain" description="TIL" evidence="2">
    <location>
        <begin position="9"/>
        <end position="62"/>
    </location>
</feature>
<feature type="site" description="Reactive bond" evidence="1">
    <location>
        <begin position="36"/>
        <end position="37"/>
    </location>
</feature>
<feature type="modified residue" description="Pyrrolidone carboxylic acid" evidence="3">
    <location>
        <position position="1"/>
    </location>
</feature>
<feature type="disulfide bond" evidence="3">
    <location>
        <begin position="9"/>
        <end position="42"/>
    </location>
</feature>
<feature type="disulfide bond" evidence="3">
    <location>
        <begin position="18"/>
        <end position="38"/>
    </location>
</feature>
<feature type="disulfide bond" evidence="3">
    <location>
        <begin position="22"/>
        <end position="34"/>
    </location>
</feature>
<feature type="disulfide bond" evidence="3">
    <location>
        <begin position="26"/>
        <end position="62"/>
    </location>
</feature>
<feature type="disulfide bond" evidence="3">
    <location>
        <begin position="44"/>
        <end position="56"/>
    </location>
</feature>
<proteinExistence type="evidence at protein level"/>
<dbReference type="SMR" id="P83516"/>
<dbReference type="MEROPS" id="I08.051"/>
<dbReference type="GO" id="GO:0004867">
    <property type="term" value="F:serine-type endopeptidase inhibitor activity"/>
    <property type="evidence" value="ECO:0007669"/>
    <property type="project" value="UniProtKB-KW"/>
</dbReference>
<dbReference type="GO" id="GO:0042742">
    <property type="term" value="P:defense response to bacterium"/>
    <property type="evidence" value="ECO:0007669"/>
    <property type="project" value="UniProtKB-KW"/>
</dbReference>
<dbReference type="CDD" id="cd19941">
    <property type="entry name" value="TIL"/>
    <property type="match status" value="1"/>
</dbReference>
<dbReference type="Gene3D" id="2.10.25.10">
    <property type="entry name" value="Laminin"/>
    <property type="match status" value="1"/>
</dbReference>
<dbReference type="InterPro" id="IPR036084">
    <property type="entry name" value="Ser_inhib-like_sf"/>
</dbReference>
<dbReference type="InterPro" id="IPR051368">
    <property type="entry name" value="SerProtInhib-TIL_Domain"/>
</dbReference>
<dbReference type="InterPro" id="IPR002919">
    <property type="entry name" value="TIL_dom"/>
</dbReference>
<dbReference type="PANTHER" id="PTHR23259:SF70">
    <property type="entry name" value="ACCESSORY GLAND PROTEIN ACP62F-RELATED"/>
    <property type="match status" value="1"/>
</dbReference>
<dbReference type="PANTHER" id="PTHR23259">
    <property type="entry name" value="RIDDLE"/>
    <property type="match status" value="1"/>
</dbReference>
<dbReference type="Pfam" id="PF01826">
    <property type="entry name" value="TIL"/>
    <property type="match status" value="1"/>
</dbReference>
<dbReference type="SUPFAM" id="SSF57567">
    <property type="entry name" value="Serine protease inhibitors"/>
    <property type="match status" value="1"/>
</dbReference>
<reference key="1">
    <citation type="journal article" date="2006" name="Peptides">
        <title>Ixodidin, a novel antimicrobial peptide from the hemocytes of the cattle tick Boophilus microplus with inhibitory activity against serine proteinases.</title>
        <authorList>
            <person name="Fogaca A.C."/>
            <person name="Almeida I.C."/>
            <person name="Eberlin M.N."/>
            <person name="Tanaka A.S."/>
            <person name="Bulet P."/>
            <person name="Daffre S."/>
        </authorList>
    </citation>
    <scope>PROTEIN SEQUENCE</scope>
    <scope>FUNCTION</scope>
    <scope>MASS SPECTROMETRY</scope>
    <scope>DISULFIDE BONDS</scope>
    <scope>PYROGLUTAMATE FORMATION AT GLN-1</scope>
    <source>
        <tissue>Hemocyte</tissue>
    </source>
</reference>
<evidence type="ECO:0000250" key="1">
    <source>
        <dbReference type="UniProtKB" id="P56682"/>
    </source>
</evidence>
<evidence type="ECO:0000255" key="2"/>
<evidence type="ECO:0000269" key="3">
    <source>
    </source>
</evidence>
<evidence type="ECO:0000303" key="4">
    <source>
    </source>
</evidence>
<evidence type="ECO:0000305" key="5"/>
<keyword id="KW-0044">Antibiotic</keyword>
<keyword id="KW-0929">Antimicrobial</keyword>
<keyword id="KW-0903">Direct protein sequencing</keyword>
<keyword id="KW-1015">Disulfide bond</keyword>
<keyword id="KW-0646">Protease inhibitor</keyword>
<keyword id="KW-0873">Pyrrolidone carboxylic acid</keyword>
<keyword id="KW-0964">Secreted</keyword>
<keyword id="KW-0722">Serine protease inhibitor</keyword>
<accession>P83516</accession>
<comment type="function">
    <text evidence="3">Inhibits chymotrypsin and elastase. Has antibacterial activity against Gram-positive bacterium M.luteus and the Gram-negative bacterium E.coli.</text>
</comment>
<comment type="subcellular location">
    <subcellularLocation>
        <location evidence="5">Secreted</location>
    </subcellularLocation>
</comment>
<comment type="mass spectrometry"/>
<comment type="similarity">
    <text evidence="5">Belongs to the serine protease inhibitor-like (TIL domain-containing) family.</text>
</comment>